<dbReference type="EMBL" id="L77117">
    <property type="protein sequence ID" value="AAB98671.1"/>
    <property type="molecule type" value="Genomic_DNA"/>
</dbReference>
<dbReference type="PIR" id="D64384">
    <property type="entry name" value="D64384"/>
</dbReference>
<dbReference type="RefSeq" id="WP_010870181.1">
    <property type="nucleotide sequence ID" value="NC_000909.1"/>
</dbReference>
<dbReference type="SMR" id="Q58089"/>
<dbReference type="FunCoup" id="Q58089">
    <property type="interactions" value="3"/>
</dbReference>
<dbReference type="STRING" id="243232.MJ_0676"/>
<dbReference type="PaxDb" id="243232-MJ_0676"/>
<dbReference type="EnsemblBacteria" id="AAB98671">
    <property type="protein sequence ID" value="AAB98671"/>
    <property type="gene ID" value="MJ_0676"/>
</dbReference>
<dbReference type="GeneID" id="1451542"/>
<dbReference type="KEGG" id="mja:MJ_0676"/>
<dbReference type="eggNOG" id="arCOG00636">
    <property type="taxonomic scope" value="Archaea"/>
</dbReference>
<dbReference type="HOGENOM" id="CLU_049733_0_0_2"/>
<dbReference type="InParanoid" id="Q58089"/>
<dbReference type="OrthoDB" id="31494at2157"/>
<dbReference type="PhylomeDB" id="Q58089"/>
<dbReference type="Proteomes" id="UP000000805">
    <property type="component" value="Chromosome"/>
</dbReference>
<dbReference type="GO" id="GO:0051604">
    <property type="term" value="P:protein maturation"/>
    <property type="evidence" value="ECO:0000318"/>
    <property type="project" value="GO_Central"/>
</dbReference>
<dbReference type="CDD" id="cd02197">
    <property type="entry name" value="HypE"/>
    <property type="match status" value="1"/>
</dbReference>
<dbReference type="Gene3D" id="3.90.650.10">
    <property type="entry name" value="PurM-like C-terminal domain"/>
    <property type="match status" value="1"/>
</dbReference>
<dbReference type="Gene3D" id="3.30.1330.10">
    <property type="entry name" value="PurM-like, N-terminal domain"/>
    <property type="match status" value="1"/>
</dbReference>
<dbReference type="InterPro" id="IPR011854">
    <property type="entry name" value="HypE"/>
</dbReference>
<dbReference type="InterPro" id="IPR010918">
    <property type="entry name" value="PurM-like_C_dom"/>
</dbReference>
<dbReference type="InterPro" id="IPR036676">
    <property type="entry name" value="PurM-like_C_sf"/>
</dbReference>
<dbReference type="InterPro" id="IPR016188">
    <property type="entry name" value="PurM-like_N"/>
</dbReference>
<dbReference type="InterPro" id="IPR036921">
    <property type="entry name" value="PurM-like_N_sf"/>
</dbReference>
<dbReference type="NCBIfam" id="TIGR02124">
    <property type="entry name" value="hypE"/>
    <property type="match status" value="1"/>
</dbReference>
<dbReference type="PANTHER" id="PTHR30303:SF0">
    <property type="entry name" value="CARBAMOYL DEHYDRATASE HYPE"/>
    <property type="match status" value="1"/>
</dbReference>
<dbReference type="PANTHER" id="PTHR30303">
    <property type="entry name" value="HYDROGENASE ISOENZYMES FORMATION PROTEIN HYPE"/>
    <property type="match status" value="1"/>
</dbReference>
<dbReference type="Pfam" id="PF00586">
    <property type="entry name" value="AIRS"/>
    <property type="match status" value="1"/>
</dbReference>
<dbReference type="Pfam" id="PF02769">
    <property type="entry name" value="AIRS_C"/>
    <property type="match status" value="1"/>
</dbReference>
<dbReference type="PIRSF" id="PIRSF005644">
    <property type="entry name" value="Hdrgns_mtr_HypE"/>
    <property type="match status" value="1"/>
</dbReference>
<dbReference type="SUPFAM" id="SSF56042">
    <property type="entry name" value="PurM C-terminal domain-like"/>
    <property type="match status" value="1"/>
</dbReference>
<dbReference type="SUPFAM" id="SSF55326">
    <property type="entry name" value="PurM N-terminal domain-like"/>
    <property type="match status" value="1"/>
</dbReference>
<sequence length="335" mass="35813">MKITRMHGAGGKVMQELIKDVILKNLEITSVNGGIGLESLDDSATIPIGDKEIVFTVDGHTVKPIFFPGGDIGRLAVSGTVNDLAVMGAKPLALSLSLIIPEGFNLEDLEKIVKSINETSKEAEVAIITGDTKVSDGVDDIIISTAGIGIVDRGKAIRDCNVQEGDAIIVSGNIGEHGLAILLSREGFDFETNIKSDVAPINKLIERVLEEGIQINAMKDPTRGGLADALNEMAEKSNIGITIFEDKIPISDEVQSICDILGLDPLTIANEGKVVMAVKKEDAERCLEILREHPLGKNAEIIGYATKEHKGVIIETIVGRRIVDMPIGDPIPRVC</sequence>
<evidence type="ECO:0000305" key="1"/>
<organism>
    <name type="scientific">Methanocaldococcus jannaschii (strain ATCC 43067 / DSM 2661 / JAL-1 / JCM 10045 / NBRC 100440)</name>
    <name type="common">Methanococcus jannaschii</name>
    <dbReference type="NCBI Taxonomy" id="243232"/>
    <lineage>
        <taxon>Archaea</taxon>
        <taxon>Methanobacteriati</taxon>
        <taxon>Methanobacteriota</taxon>
        <taxon>Methanomada group</taxon>
        <taxon>Methanococci</taxon>
        <taxon>Methanococcales</taxon>
        <taxon>Methanocaldococcaceae</taxon>
        <taxon>Methanocaldococcus</taxon>
    </lineage>
</organism>
<comment type="similarity">
    <text evidence="1">Belongs to the HypE family.</text>
</comment>
<feature type="chain" id="PRO_0000201462" description="Putative hydrogenase expression/formation protein MJ0676">
    <location>
        <begin position="1"/>
        <end position="335"/>
    </location>
</feature>
<proteinExistence type="inferred from homology"/>
<reference key="1">
    <citation type="journal article" date="1996" name="Science">
        <title>Complete genome sequence of the methanogenic archaeon, Methanococcus jannaschii.</title>
        <authorList>
            <person name="Bult C.J."/>
            <person name="White O."/>
            <person name="Olsen G.J."/>
            <person name="Zhou L."/>
            <person name="Fleischmann R.D."/>
            <person name="Sutton G.G."/>
            <person name="Blake J.A."/>
            <person name="FitzGerald L.M."/>
            <person name="Clayton R.A."/>
            <person name="Gocayne J.D."/>
            <person name="Kerlavage A.R."/>
            <person name="Dougherty B.A."/>
            <person name="Tomb J.-F."/>
            <person name="Adams M.D."/>
            <person name="Reich C.I."/>
            <person name="Overbeek R."/>
            <person name="Kirkness E.F."/>
            <person name="Weinstock K.G."/>
            <person name="Merrick J.M."/>
            <person name="Glodek A."/>
            <person name="Scott J.L."/>
            <person name="Geoghagen N.S.M."/>
            <person name="Weidman J.F."/>
            <person name="Fuhrmann J.L."/>
            <person name="Nguyen D."/>
            <person name="Utterback T.R."/>
            <person name="Kelley J.M."/>
            <person name="Peterson J.D."/>
            <person name="Sadow P.W."/>
            <person name="Hanna M.C."/>
            <person name="Cotton M.D."/>
            <person name="Roberts K.M."/>
            <person name="Hurst M.A."/>
            <person name="Kaine B.P."/>
            <person name="Borodovsky M."/>
            <person name="Klenk H.-P."/>
            <person name="Fraser C.M."/>
            <person name="Smith H.O."/>
            <person name="Woese C.R."/>
            <person name="Venter J.C."/>
        </authorList>
    </citation>
    <scope>NUCLEOTIDE SEQUENCE [LARGE SCALE GENOMIC DNA]</scope>
    <source>
        <strain>ATCC 43067 / DSM 2661 / JAL-1 / JCM 10045 / NBRC 100440</strain>
    </source>
</reference>
<accession>Q58089</accession>
<gene>
    <name type="ordered locus">MJ0676</name>
</gene>
<name>Y676_METJA</name>
<keyword id="KW-1185">Reference proteome</keyword>
<protein>
    <recommendedName>
        <fullName>Putative hydrogenase expression/formation protein MJ0676</fullName>
    </recommendedName>
</protein>